<dbReference type="EC" id="7.1.1.-" evidence="1"/>
<dbReference type="EMBL" id="CP000552">
    <property type="protein sequence ID" value="ABM72948.1"/>
    <property type="molecule type" value="Genomic_DNA"/>
</dbReference>
<dbReference type="RefSeq" id="WP_011821038.1">
    <property type="nucleotide sequence ID" value="NC_008817.1"/>
</dbReference>
<dbReference type="SMR" id="A2BYT7"/>
<dbReference type="STRING" id="167542.P9515_17411"/>
<dbReference type="GeneID" id="60200844"/>
<dbReference type="KEGG" id="pmc:P9515_17411"/>
<dbReference type="eggNOG" id="ENOG5033TWM">
    <property type="taxonomic scope" value="Bacteria"/>
</dbReference>
<dbReference type="HOGENOM" id="CLU_087432_0_0_3"/>
<dbReference type="OrthoDB" id="510798at2"/>
<dbReference type="Proteomes" id="UP000001589">
    <property type="component" value="Chromosome"/>
</dbReference>
<dbReference type="GO" id="GO:0031676">
    <property type="term" value="C:plasma membrane-derived thylakoid membrane"/>
    <property type="evidence" value="ECO:0007669"/>
    <property type="project" value="UniProtKB-SubCell"/>
</dbReference>
<dbReference type="GO" id="GO:0016655">
    <property type="term" value="F:oxidoreductase activity, acting on NAD(P)H, quinone or similar compound as acceptor"/>
    <property type="evidence" value="ECO:0007669"/>
    <property type="project" value="UniProtKB-UniRule"/>
</dbReference>
<dbReference type="GO" id="GO:0048038">
    <property type="term" value="F:quinone binding"/>
    <property type="evidence" value="ECO:0007669"/>
    <property type="project" value="UniProtKB-KW"/>
</dbReference>
<dbReference type="HAMAP" id="MF_01353">
    <property type="entry name" value="NDH1_NDH1N"/>
    <property type="match status" value="1"/>
</dbReference>
<dbReference type="InterPro" id="IPR020874">
    <property type="entry name" value="NAD(P)H-quinone_OxRdtase_su_N"/>
</dbReference>
<dbReference type="PANTHER" id="PTHR35515">
    <property type="entry name" value="NAD(P)H-QUINONE OXIDOREDUCTASE SUBUNIT N, CHLOROPLASTIC"/>
    <property type="match status" value="1"/>
</dbReference>
<dbReference type="PANTHER" id="PTHR35515:SF1">
    <property type="entry name" value="NAD(P)H-QUINONE OXIDOREDUCTASE SUBUNIT N, CHLOROPLASTIC"/>
    <property type="match status" value="1"/>
</dbReference>
<dbReference type="Pfam" id="PF11909">
    <property type="entry name" value="NdhN"/>
    <property type="match status" value="1"/>
</dbReference>
<protein>
    <recommendedName>
        <fullName evidence="1">NAD(P)H-quinone oxidoreductase subunit N</fullName>
        <ecNumber evidence="1">7.1.1.-</ecNumber>
    </recommendedName>
    <alternativeName>
        <fullName evidence="1">NAD(P)H dehydrogenase I subunit N</fullName>
        <shortName evidence="1">NDH-1 subunit N</shortName>
        <shortName evidence="1">NDH-N</shortName>
    </alternativeName>
</protein>
<sequence length="156" mass="17639">MPLLLSGKKFHNDLKKNKCLAMFAPLEGGYETRLLRRMRAKGFKTYITSARGLGDPEVFLLNLHGIRPPHLGHQSIGRNGALGEVQQVIPQASELFNENDKDKLLWLLEGQVLSQSELENLIKLPTADNKLKIVVEMGGSRKLEWKSLNDYVLNEF</sequence>
<keyword id="KW-0472">Membrane</keyword>
<keyword id="KW-0520">NAD</keyword>
<keyword id="KW-0521">NADP</keyword>
<keyword id="KW-0618">Plastoquinone</keyword>
<keyword id="KW-0874">Quinone</keyword>
<keyword id="KW-0793">Thylakoid</keyword>
<keyword id="KW-1278">Translocase</keyword>
<keyword id="KW-0813">Transport</keyword>
<comment type="function">
    <text evidence="1">NDH-1 shuttles electrons from an unknown electron donor, via FMN and iron-sulfur (Fe-S) centers, to quinones in the respiratory and/or the photosynthetic chain. The immediate electron acceptor for the enzyme in this species is believed to be plastoquinone. Couples the redox reaction to proton translocation, and thus conserves the redox energy in a proton gradient. Cyanobacterial NDH-1 also plays a role in inorganic carbon-concentration.</text>
</comment>
<comment type="catalytic activity">
    <reaction evidence="1">
        <text>a plastoquinone + NADH + (n+1) H(+)(in) = a plastoquinol + NAD(+) + n H(+)(out)</text>
        <dbReference type="Rhea" id="RHEA:42608"/>
        <dbReference type="Rhea" id="RHEA-COMP:9561"/>
        <dbReference type="Rhea" id="RHEA-COMP:9562"/>
        <dbReference type="ChEBI" id="CHEBI:15378"/>
        <dbReference type="ChEBI" id="CHEBI:17757"/>
        <dbReference type="ChEBI" id="CHEBI:57540"/>
        <dbReference type="ChEBI" id="CHEBI:57945"/>
        <dbReference type="ChEBI" id="CHEBI:62192"/>
    </reaction>
</comment>
<comment type="catalytic activity">
    <reaction evidence="1">
        <text>a plastoquinone + NADPH + (n+1) H(+)(in) = a plastoquinol + NADP(+) + n H(+)(out)</text>
        <dbReference type="Rhea" id="RHEA:42612"/>
        <dbReference type="Rhea" id="RHEA-COMP:9561"/>
        <dbReference type="Rhea" id="RHEA-COMP:9562"/>
        <dbReference type="ChEBI" id="CHEBI:15378"/>
        <dbReference type="ChEBI" id="CHEBI:17757"/>
        <dbReference type="ChEBI" id="CHEBI:57783"/>
        <dbReference type="ChEBI" id="CHEBI:58349"/>
        <dbReference type="ChEBI" id="CHEBI:62192"/>
    </reaction>
</comment>
<comment type="subunit">
    <text evidence="1">NDH-1 can be composed of about 15 different subunits; different subcomplexes with different compositions have been identified which probably have different functions.</text>
</comment>
<comment type="subcellular location">
    <subcellularLocation>
        <location evidence="1">Cellular thylakoid membrane</location>
        <topology evidence="1">Peripheral membrane protein</topology>
        <orientation evidence="1">Cytoplasmic side</orientation>
    </subcellularLocation>
</comment>
<comment type="similarity">
    <text evidence="1">Belongs to the complex I NdhN subunit family.</text>
</comment>
<feature type="chain" id="PRO_0000352227" description="NAD(P)H-quinone oxidoreductase subunit N">
    <location>
        <begin position="1"/>
        <end position="156"/>
    </location>
</feature>
<name>NDHN_PROM5</name>
<evidence type="ECO:0000255" key="1">
    <source>
        <dbReference type="HAMAP-Rule" id="MF_01353"/>
    </source>
</evidence>
<proteinExistence type="inferred from homology"/>
<reference key="1">
    <citation type="journal article" date="2007" name="PLoS Genet.">
        <title>Patterns and implications of gene gain and loss in the evolution of Prochlorococcus.</title>
        <authorList>
            <person name="Kettler G.C."/>
            <person name="Martiny A.C."/>
            <person name="Huang K."/>
            <person name="Zucker J."/>
            <person name="Coleman M.L."/>
            <person name="Rodrigue S."/>
            <person name="Chen F."/>
            <person name="Lapidus A."/>
            <person name="Ferriera S."/>
            <person name="Johnson J."/>
            <person name="Steglich C."/>
            <person name="Church G.M."/>
            <person name="Richardson P."/>
            <person name="Chisholm S.W."/>
        </authorList>
    </citation>
    <scope>NUCLEOTIDE SEQUENCE [LARGE SCALE GENOMIC DNA]</scope>
    <source>
        <strain>MIT 9515</strain>
    </source>
</reference>
<gene>
    <name evidence="1" type="primary">ndhN</name>
    <name type="ordered locus">P9515_17411</name>
</gene>
<accession>A2BYT7</accession>
<organism>
    <name type="scientific">Prochlorococcus marinus (strain MIT 9515)</name>
    <dbReference type="NCBI Taxonomy" id="167542"/>
    <lineage>
        <taxon>Bacteria</taxon>
        <taxon>Bacillati</taxon>
        <taxon>Cyanobacteriota</taxon>
        <taxon>Cyanophyceae</taxon>
        <taxon>Synechococcales</taxon>
        <taxon>Prochlorococcaceae</taxon>
        <taxon>Prochlorococcus</taxon>
    </lineage>
</organism>